<sequence length="139" mass="14894">MIKEFREFISRGNVIDLAVGVIVGAAFTAIINSLVNDIINPLIGLLVGGRADFSNYFIPLAGQTATTLAEAQAAGPVLAYGSFLTAVINFLLIAFVVFMIVRTVNRMRSKPEAVPPAPPEPTPSERLLAEIRDLLARQG</sequence>
<name>MSCL_CHLAA</name>
<organism>
    <name type="scientific">Chloroflexus aurantiacus (strain ATCC 29366 / DSM 635 / J-10-fl)</name>
    <dbReference type="NCBI Taxonomy" id="324602"/>
    <lineage>
        <taxon>Bacteria</taxon>
        <taxon>Bacillati</taxon>
        <taxon>Chloroflexota</taxon>
        <taxon>Chloroflexia</taxon>
        <taxon>Chloroflexales</taxon>
        <taxon>Chloroflexineae</taxon>
        <taxon>Chloroflexaceae</taxon>
        <taxon>Chloroflexus</taxon>
    </lineage>
</organism>
<dbReference type="EMBL" id="CP000909">
    <property type="protein sequence ID" value="ABY35893.1"/>
    <property type="molecule type" value="Genomic_DNA"/>
</dbReference>
<dbReference type="RefSeq" id="WP_012258546.1">
    <property type="nucleotide sequence ID" value="NC_010175.1"/>
</dbReference>
<dbReference type="RefSeq" id="YP_001636282.1">
    <property type="nucleotide sequence ID" value="NC_010175.1"/>
</dbReference>
<dbReference type="SMR" id="A9WJI9"/>
<dbReference type="FunCoup" id="A9WJI9">
    <property type="interactions" value="234"/>
</dbReference>
<dbReference type="STRING" id="324602.Caur_2688"/>
<dbReference type="EnsemblBacteria" id="ABY35893">
    <property type="protein sequence ID" value="ABY35893"/>
    <property type="gene ID" value="Caur_2688"/>
</dbReference>
<dbReference type="KEGG" id="cau:Caur_2688"/>
<dbReference type="PATRIC" id="fig|324602.8.peg.3030"/>
<dbReference type="eggNOG" id="COG1970">
    <property type="taxonomic scope" value="Bacteria"/>
</dbReference>
<dbReference type="HOGENOM" id="CLU_095787_0_1_0"/>
<dbReference type="InParanoid" id="A9WJI9"/>
<dbReference type="Proteomes" id="UP000002008">
    <property type="component" value="Chromosome"/>
</dbReference>
<dbReference type="GO" id="GO:0016020">
    <property type="term" value="C:membrane"/>
    <property type="evidence" value="ECO:0000318"/>
    <property type="project" value="GO_Central"/>
</dbReference>
<dbReference type="GO" id="GO:0005886">
    <property type="term" value="C:plasma membrane"/>
    <property type="evidence" value="ECO:0007669"/>
    <property type="project" value="UniProtKB-SubCell"/>
</dbReference>
<dbReference type="GO" id="GO:0008381">
    <property type="term" value="F:mechanosensitive monoatomic ion channel activity"/>
    <property type="evidence" value="ECO:0000318"/>
    <property type="project" value="GO_Central"/>
</dbReference>
<dbReference type="GO" id="GO:0006811">
    <property type="term" value="P:monoatomic ion transport"/>
    <property type="evidence" value="ECO:0000318"/>
    <property type="project" value="GO_Central"/>
</dbReference>
<dbReference type="Gene3D" id="1.10.1200.120">
    <property type="entry name" value="Large-conductance mechanosensitive channel, MscL, domain 1"/>
    <property type="match status" value="1"/>
</dbReference>
<dbReference type="HAMAP" id="MF_00115">
    <property type="entry name" value="MscL"/>
    <property type="match status" value="1"/>
</dbReference>
<dbReference type="InterPro" id="IPR019823">
    <property type="entry name" value="Mechanosensitive_channel_CS"/>
</dbReference>
<dbReference type="InterPro" id="IPR001185">
    <property type="entry name" value="MS_channel"/>
</dbReference>
<dbReference type="InterPro" id="IPR037673">
    <property type="entry name" value="MSC/AndL"/>
</dbReference>
<dbReference type="InterPro" id="IPR036019">
    <property type="entry name" value="MscL_channel"/>
</dbReference>
<dbReference type="NCBIfam" id="TIGR00220">
    <property type="entry name" value="mscL"/>
    <property type="match status" value="1"/>
</dbReference>
<dbReference type="NCBIfam" id="NF001843">
    <property type="entry name" value="PRK00567.1-4"/>
    <property type="match status" value="1"/>
</dbReference>
<dbReference type="NCBIfam" id="NF010557">
    <property type="entry name" value="PRK13952.1"/>
    <property type="match status" value="1"/>
</dbReference>
<dbReference type="PANTHER" id="PTHR30266:SF2">
    <property type="entry name" value="LARGE-CONDUCTANCE MECHANOSENSITIVE CHANNEL"/>
    <property type="match status" value="1"/>
</dbReference>
<dbReference type="PANTHER" id="PTHR30266">
    <property type="entry name" value="MECHANOSENSITIVE CHANNEL MSCL"/>
    <property type="match status" value="1"/>
</dbReference>
<dbReference type="Pfam" id="PF01741">
    <property type="entry name" value="MscL"/>
    <property type="match status" value="1"/>
</dbReference>
<dbReference type="PRINTS" id="PR01264">
    <property type="entry name" value="MECHCHANNEL"/>
</dbReference>
<dbReference type="SUPFAM" id="SSF81330">
    <property type="entry name" value="Gated mechanosensitive channel"/>
    <property type="match status" value="1"/>
</dbReference>
<dbReference type="PROSITE" id="PS01327">
    <property type="entry name" value="MSCL"/>
    <property type="match status" value="1"/>
</dbReference>
<proteinExistence type="inferred from homology"/>
<gene>
    <name evidence="1" type="primary">mscL</name>
    <name type="ordered locus">Caur_2688</name>
</gene>
<accession>A9WJI9</accession>
<keyword id="KW-1003">Cell membrane</keyword>
<keyword id="KW-0407">Ion channel</keyword>
<keyword id="KW-0406">Ion transport</keyword>
<keyword id="KW-0472">Membrane</keyword>
<keyword id="KW-1185">Reference proteome</keyword>
<keyword id="KW-0812">Transmembrane</keyword>
<keyword id="KW-1133">Transmembrane helix</keyword>
<keyword id="KW-0813">Transport</keyword>
<evidence type="ECO:0000255" key="1">
    <source>
        <dbReference type="HAMAP-Rule" id="MF_00115"/>
    </source>
</evidence>
<protein>
    <recommendedName>
        <fullName evidence="1">Large-conductance mechanosensitive channel</fullName>
    </recommendedName>
</protein>
<reference key="1">
    <citation type="journal article" date="2011" name="BMC Genomics">
        <title>Complete genome sequence of the filamentous anoxygenic phototrophic bacterium Chloroflexus aurantiacus.</title>
        <authorList>
            <person name="Tang K.H."/>
            <person name="Barry K."/>
            <person name="Chertkov O."/>
            <person name="Dalin E."/>
            <person name="Han C.S."/>
            <person name="Hauser L.J."/>
            <person name="Honchak B.M."/>
            <person name="Karbach L.E."/>
            <person name="Land M.L."/>
            <person name="Lapidus A."/>
            <person name="Larimer F.W."/>
            <person name="Mikhailova N."/>
            <person name="Pitluck S."/>
            <person name="Pierson B.K."/>
            <person name="Blankenship R.E."/>
        </authorList>
    </citation>
    <scope>NUCLEOTIDE SEQUENCE [LARGE SCALE GENOMIC DNA]</scope>
    <source>
        <strain>ATCC 29366 / DSM 635 / J-10-fl</strain>
    </source>
</reference>
<feature type="chain" id="PRO_1000191360" description="Large-conductance mechanosensitive channel">
    <location>
        <begin position="1"/>
        <end position="139"/>
    </location>
</feature>
<feature type="transmembrane region" description="Helical" evidence="1">
    <location>
        <begin position="14"/>
        <end position="34"/>
    </location>
</feature>
<feature type="transmembrane region" description="Helical" evidence="1">
    <location>
        <begin position="81"/>
        <end position="101"/>
    </location>
</feature>
<comment type="function">
    <text evidence="1">Channel that opens in response to stretch forces in the membrane lipid bilayer. May participate in the regulation of osmotic pressure changes within the cell.</text>
</comment>
<comment type="subunit">
    <text evidence="1">Homopentamer.</text>
</comment>
<comment type="subcellular location">
    <subcellularLocation>
        <location evidence="1">Cell membrane</location>
        <topology evidence="1">Multi-pass membrane protein</topology>
    </subcellularLocation>
</comment>
<comment type="similarity">
    <text evidence="1">Belongs to the MscL family.</text>
</comment>